<accession>P0DUI4</accession>
<keyword id="KW-0027">Amidation</keyword>
<keyword id="KW-0903">Direct protein sequencing</keyword>
<keyword id="KW-1015">Disulfide bond</keyword>
<keyword id="KW-0872">Ion channel impairing toxin</keyword>
<keyword id="KW-0528">Neurotoxin</keyword>
<keyword id="KW-0632">Potassium channel impairing toxin</keyword>
<keyword id="KW-0964">Secreted</keyword>
<keyword id="KW-0732">Signal</keyword>
<keyword id="KW-0800">Toxin</keyword>
<keyword id="KW-1220">Voltage-gated potassium channel impairing toxin</keyword>
<comment type="function">
    <text evidence="3">Blocks voltage-gated potassium channels.</text>
</comment>
<comment type="subcellular location">
    <subcellularLocation>
        <location evidence="4">Secreted</location>
    </subcellularLocation>
</comment>
<comment type="tissue specificity">
    <text evidence="7">Expressed by the venom gland.</text>
</comment>
<comment type="domain">
    <text evidence="6">Has the structural arrangement of an alpha-helix connected to a beta-sheet by disulfide bonds (CSalpha/beta).</text>
</comment>
<comment type="mass spectrometry" mass="4255.0" method="Electrospray" evidence="4">
    <text>Average mass.</text>
</comment>
<comment type="similarity">
    <text evidence="6">Belongs to the short scorpion toxin superfamily. Potassium channel inhibitor family. Alpha-KTx 02 subfamily.</text>
</comment>
<protein>
    <recommendedName>
        <fullName evidence="5">Toxin Ct28</fullName>
    </recommendedName>
    <alternativeName>
        <fullName evidence="6">Potassium channel toxin alpha-KTx 2</fullName>
    </alternativeName>
</protein>
<organism>
    <name type="scientific">Centruroides tecomanus</name>
    <name type="common">Scorpion</name>
    <name type="synonym">Centruroides limpidus tecomanus</name>
    <dbReference type="NCBI Taxonomy" id="1028682"/>
    <lineage>
        <taxon>Eukaryota</taxon>
        <taxon>Metazoa</taxon>
        <taxon>Ecdysozoa</taxon>
        <taxon>Arthropoda</taxon>
        <taxon>Chelicerata</taxon>
        <taxon>Arachnida</taxon>
        <taxon>Scorpiones</taxon>
        <taxon>Buthida</taxon>
        <taxon>Buthoidea</taxon>
        <taxon>Buthidae</taxon>
        <taxon>Centruroides</taxon>
    </lineage>
</organism>
<evidence type="ECO:0000250" key="1"/>
<evidence type="ECO:0000250" key="2">
    <source>
        <dbReference type="UniProtKB" id="P08815"/>
    </source>
</evidence>
<evidence type="ECO:0000250" key="3">
    <source>
        <dbReference type="UniProtKB" id="P0C161"/>
    </source>
</evidence>
<evidence type="ECO:0000269" key="4">
    <source>
    </source>
</evidence>
<evidence type="ECO:0000303" key="5">
    <source>
    </source>
</evidence>
<evidence type="ECO:0000305" key="6"/>
<evidence type="ECO:0000305" key="7">
    <source>
    </source>
</evidence>
<name>KAX2K_CENTE</name>
<proteinExistence type="evidence at protein level"/>
<feature type="signal peptide" evidence="7">
    <location>
        <begin position="1"/>
        <end position="22"/>
    </location>
</feature>
<feature type="chain" id="PRO_0000452431" description="Toxin Ct28" evidence="7">
    <location>
        <begin position="23"/>
        <end position="61"/>
    </location>
</feature>
<feature type="site" description="Basic residue of the functional dyad" evidence="1">
    <location>
        <position position="50"/>
    </location>
</feature>
<feature type="site" description="Aromatic residue of the functional dyad" evidence="1">
    <location>
        <position position="59"/>
    </location>
</feature>
<feature type="modified residue" description="Asparagine amide" evidence="7">
    <location>
        <position position="61"/>
    </location>
</feature>
<feature type="disulfide bond" evidence="2">
    <location>
        <begin position="29"/>
        <end position="51"/>
    </location>
</feature>
<feature type="disulfide bond" evidence="2">
    <location>
        <begin position="35"/>
        <end position="56"/>
    </location>
</feature>
<feature type="disulfide bond" evidence="2">
    <location>
        <begin position="39"/>
        <end position="58"/>
    </location>
</feature>
<reference key="1">
    <citation type="journal article" date="2013" name="PLoS ONE">
        <title>Mass fingerprinting of the venom and transcriptome of venom gland of scorpion Centruroides tecomanus.</title>
        <authorList>
            <person name="Valdez-Velazquez L.L."/>
            <person name="Quintero-Hernandez V."/>
            <person name="Romero-Gutierrez M.T."/>
            <person name="Coronas F.I."/>
            <person name="Possani L.D."/>
        </authorList>
    </citation>
    <scope>NUCLEOTIDE SEQUENCE [MRNA]</scope>
    <scope>PROTEIN SEQUENCE OF 23-46</scope>
    <scope>PROBABLE AMIDATION AT ASN-61</scope>
    <scope>MASS SPECTROMETRY</scope>
    <scope>SUBCELLULAR LOCATION</scope>
    <source>
        <tissue>Venom</tissue>
        <tissue>Venom gland</tissue>
    </source>
</reference>
<dbReference type="EMBL" id="JZ122292">
    <property type="status" value="NOT_ANNOTATED_CDS"/>
    <property type="molecule type" value="mRNA"/>
</dbReference>
<dbReference type="SMR" id="P0DUI4"/>
<dbReference type="GO" id="GO:0005576">
    <property type="term" value="C:extracellular region"/>
    <property type="evidence" value="ECO:0000314"/>
    <property type="project" value="UniProtKB"/>
</dbReference>
<dbReference type="GO" id="GO:0008200">
    <property type="term" value="F:ion channel inhibitor activity"/>
    <property type="evidence" value="ECO:0007669"/>
    <property type="project" value="InterPro"/>
</dbReference>
<dbReference type="GO" id="GO:0015459">
    <property type="term" value="F:potassium channel regulator activity"/>
    <property type="evidence" value="ECO:0007669"/>
    <property type="project" value="UniProtKB-KW"/>
</dbReference>
<dbReference type="GO" id="GO:0090729">
    <property type="term" value="F:toxin activity"/>
    <property type="evidence" value="ECO:0007669"/>
    <property type="project" value="UniProtKB-KW"/>
</dbReference>
<dbReference type="FunFam" id="3.30.30.10:FF:000009">
    <property type="entry name" value="Potassium channel toxin alpha-KTx 4.3"/>
    <property type="match status" value="1"/>
</dbReference>
<dbReference type="Gene3D" id="3.30.30.10">
    <property type="entry name" value="Knottin, scorpion toxin-like"/>
    <property type="match status" value="1"/>
</dbReference>
<dbReference type="InterPro" id="IPR036574">
    <property type="entry name" value="Scorpion_toxin-like_sf"/>
</dbReference>
<dbReference type="InterPro" id="IPR001947">
    <property type="entry name" value="Scorpion_toxinS_K_inh"/>
</dbReference>
<dbReference type="Pfam" id="PF00451">
    <property type="entry name" value="Toxin_2"/>
    <property type="match status" value="1"/>
</dbReference>
<dbReference type="PRINTS" id="PR00286">
    <property type="entry name" value="CHARYBDTOXIN"/>
</dbReference>
<dbReference type="SUPFAM" id="SSF57095">
    <property type="entry name" value="Scorpion toxin-like"/>
    <property type="match status" value="1"/>
</dbReference>
<dbReference type="PROSITE" id="PS01138">
    <property type="entry name" value="SCORP_SHORT_TOXIN"/>
    <property type="match status" value="1"/>
</dbReference>
<sequence length="62" mass="6883">MKAFYGILIILLFCSMFKLNESTTINVKCTSPKQCLKPCKDLYGPHAGAKCMNGKCKCYNNG</sequence>